<gene>
    <name type="primary">DBF4</name>
    <name type="synonym">DBF4A</name>
</gene>
<evidence type="ECO:0000250" key="1"/>
<evidence type="ECO:0000250" key="2">
    <source>
        <dbReference type="UniProtKB" id="Q9UBU7"/>
    </source>
</evidence>
<evidence type="ECO:0000255" key="3">
    <source>
        <dbReference type="PROSITE-ProRule" id="PRU00600"/>
    </source>
</evidence>
<evidence type="ECO:0000256" key="4">
    <source>
        <dbReference type="SAM" id="MobiDB-lite"/>
    </source>
</evidence>
<evidence type="ECO:0000269" key="5">
    <source>
    </source>
</evidence>
<comment type="function">
    <text evidence="1">Regulatory subunit for CDC7 which activates its kinase activity thereby playing a central role in DNA replication and cell proliferation. Required for progression of S phase. The complex CDC7-DBF4A selectively phosphorylates MCM2 subunit at 'Ser-40' and 'Ser-53' and then is involved in regulating the initiation of DNA replication during cell cycle (By similarity).</text>
</comment>
<comment type="subunit">
    <text evidence="2">Forms a complex with CDC7. Note that CDC7 forms distinct complex either with DBF4A or DBF4B. Such complexes are stable upon replication stress. Interacts with MEN1, MCM2, ORC2, ORC4 and ORC6 (By similarity). Interacts (via IBM motifs) with PSIP1 (via IBD domain); phosphorylation increases its affinity for PSIP1 (By similarity).</text>
</comment>
<comment type="subcellular location">
    <subcellularLocation>
        <location evidence="5">Nucleus</location>
    </subcellularLocation>
</comment>
<comment type="induction">
    <text evidence="5">Up-regulated when cells reaches the G(1)/S boundary. Down-regulated by gamma-irradiation.</text>
</comment>
<comment type="PTM">
    <text evidence="2">Phosphorylation increases its interaction with PSIP1.</text>
</comment>
<feature type="chain" id="PRO_0000234060" description="Protein DBF4 homolog A">
    <location>
        <begin position="1"/>
        <end position="676"/>
    </location>
</feature>
<feature type="domain" description="BRCT 1">
    <location>
        <begin position="40"/>
        <end position="128"/>
    </location>
</feature>
<feature type="domain" description="BRCT 2">
    <location>
        <begin position="154"/>
        <end position="179"/>
    </location>
</feature>
<feature type="zinc finger region" description="DBF4-type" evidence="3">
    <location>
        <begin position="289"/>
        <end position="337"/>
    </location>
</feature>
<feature type="region of interest" description="Disordered" evidence="4">
    <location>
        <begin position="1"/>
        <end position="40"/>
    </location>
</feature>
<feature type="region of interest" description="Disordered" evidence="4">
    <location>
        <begin position="98"/>
        <end position="132"/>
    </location>
</feature>
<feature type="region of interest" description="Disordered" evidence="4">
    <location>
        <begin position="253"/>
        <end position="281"/>
    </location>
</feature>
<feature type="short sequence motif" description="Integrase domain-binding motif 1 (IBM1)" evidence="2">
    <location>
        <begin position="616"/>
        <end position="640"/>
    </location>
</feature>
<feature type="short sequence motif" description="Integrase domain-binding motif 2 (IBM2)" evidence="2">
    <location>
        <begin position="657"/>
        <end position="676"/>
    </location>
</feature>
<feature type="compositionally biased region" description="Basic and acidic residues" evidence="4">
    <location>
        <begin position="21"/>
        <end position="40"/>
    </location>
</feature>
<feature type="compositionally biased region" description="Polar residues" evidence="4">
    <location>
        <begin position="113"/>
        <end position="129"/>
    </location>
</feature>
<feature type="binding site" evidence="3">
    <location>
        <position position="296"/>
    </location>
    <ligand>
        <name>Zn(2+)</name>
        <dbReference type="ChEBI" id="CHEBI:29105"/>
    </ligand>
</feature>
<feature type="binding site" evidence="3">
    <location>
        <position position="299"/>
    </location>
    <ligand>
        <name>Zn(2+)</name>
        <dbReference type="ChEBI" id="CHEBI:29105"/>
    </ligand>
</feature>
<feature type="binding site" evidence="3">
    <location>
        <position position="309"/>
    </location>
    <ligand>
        <name>Zn(2+)</name>
        <dbReference type="ChEBI" id="CHEBI:29105"/>
    </ligand>
</feature>
<feature type="binding site" evidence="3">
    <location>
        <position position="315"/>
    </location>
    <ligand>
        <name>Zn(2+)</name>
        <dbReference type="ChEBI" id="CHEBI:29105"/>
    </ligand>
</feature>
<feature type="modified residue" description="Phosphothreonine" evidence="2">
    <location>
        <position position="273"/>
    </location>
</feature>
<feature type="modified residue" description="Phosphoserine" evidence="2">
    <location>
        <position position="312"/>
    </location>
</feature>
<feature type="modified residue" description="Phosphothreonine" evidence="2">
    <location>
        <position position="345"/>
    </location>
</feature>
<feature type="modified residue" description="Phosphoserine" evidence="2">
    <location>
        <position position="354"/>
    </location>
</feature>
<feature type="modified residue" description="Phosphoserine" evidence="2">
    <location>
        <position position="359"/>
    </location>
</feature>
<feature type="modified residue" description="Phosphoserine" evidence="2">
    <location>
        <position position="418"/>
    </location>
</feature>
<feature type="modified residue" description="Phosphoserine" evidence="2">
    <location>
        <position position="627"/>
    </location>
</feature>
<feature type="modified residue" description="Phosphoserine" evidence="2">
    <location>
        <position position="669"/>
    </location>
</feature>
<feature type="modified residue" description="Phosphoserine" evidence="2">
    <location>
        <position position="671"/>
    </location>
</feature>
<name>DBF4A_CRIGR</name>
<proteinExistence type="evidence at transcript level"/>
<organism>
    <name type="scientific">Cricetulus griseus</name>
    <name type="common">Chinese hamster</name>
    <name type="synonym">Cricetulus barabensis griseus</name>
    <dbReference type="NCBI Taxonomy" id="10029"/>
    <lineage>
        <taxon>Eukaryota</taxon>
        <taxon>Metazoa</taxon>
        <taxon>Chordata</taxon>
        <taxon>Craniata</taxon>
        <taxon>Vertebrata</taxon>
        <taxon>Euteleostomi</taxon>
        <taxon>Mammalia</taxon>
        <taxon>Eutheria</taxon>
        <taxon>Euarchontoglires</taxon>
        <taxon>Glires</taxon>
        <taxon>Rodentia</taxon>
        <taxon>Myomorpha</taxon>
        <taxon>Muroidea</taxon>
        <taxon>Cricetidae</taxon>
        <taxon>Cricetinae</taxon>
        <taxon>Cricetulus</taxon>
    </lineage>
</organism>
<accession>Q99MU0</accession>
<reference key="1">
    <citation type="journal article" date="2001" name="Gene">
        <title>Cloning and characterization of Chinese hamster homologue of yeast DBF4 (ChDBF4).</title>
        <authorList>
            <person name="Guo B."/>
            <person name="Lee H."/>
        </authorList>
    </citation>
    <scope>NUCLEOTIDE SEQUENCE [MRNA]</scope>
    <scope>SUBCELLULAR LOCATION</scope>
    <scope>INDUCTION</scope>
</reference>
<dbReference type="EMBL" id="AF292400">
    <property type="protein sequence ID" value="AAK21856.1"/>
    <property type="molecule type" value="mRNA"/>
</dbReference>
<dbReference type="RefSeq" id="NP_001233700.1">
    <property type="nucleotide sequence ID" value="NM_001246771.1"/>
</dbReference>
<dbReference type="SMR" id="Q99MU0"/>
<dbReference type="PaxDb" id="10029-NP_001233700.1"/>
<dbReference type="GeneID" id="100689339"/>
<dbReference type="KEGG" id="cge:100689339"/>
<dbReference type="CTD" id="10926"/>
<dbReference type="eggNOG" id="KOG4139">
    <property type="taxonomic scope" value="Eukaryota"/>
</dbReference>
<dbReference type="OrthoDB" id="21380at2759"/>
<dbReference type="Proteomes" id="UP000694386">
    <property type="component" value="Unplaced"/>
</dbReference>
<dbReference type="Proteomes" id="UP001108280">
    <property type="component" value="Chromosome 1"/>
</dbReference>
<dbReference type="GO" id="GO:0031431">
    <property type="term" value="C:Dbf4-dependent protein kinase complex"/>
    <property type="evidence" value="ECO:0007669"/>
    <property type="project" value="TreeGrafter"/>
</dbReference>
<dbReference type="GO" id="GO:0003676">
    <property type="term" value="F:nucleic acid binding"/>
    <property type="evidence" value="ECO:0007669"/>
    <property type="project" value="InterPro"/>
</dbReference>
<dbReference type="GO" id="GO:0043539">
    <property type="term" value="F:protein serine/threonine kinase activator activity"/>
    <property type="evidence" value="ECO:0007669"/>
    <property type="project" value="TreeGrafter"/>
</dbReference>
<dbReference type="GO" id="GO:0008270">
    <property type="term" value="F:zinc ion binding"/>
    <property type="evidence" value="ECO:0007669"/>
    <property type="project" value="UniProtKB-KW"/>
</dbReference>
<dbReference type="GO" id="GO:0006260">
    <property type="term" value="P:DNA replication"/>
    <property type="evidence" value="ECO:0007669"/>
    <property type="project" value="UniProtKB-KW"/>
</dbReference>
<dbReference type="GO" id="GO:0010571">
    <property type="term" value="P:positive regulation of nuclear cell cycle DNA replication"/>
    <property type="evidence" value="ECO:0007669"/>
    <property type="project" value="TreeGrafter"/>
</dbReference>
<dbReference type="GO" id="GO:1901987">
    <property type="term" value="P:regulation of cell cycle phase transition"/>
    <property type="evidence" value="ECO:0007669"/>
    <property type="project" value="TreeGrafter"/>
</dbReference>
<dbReference type="FunFam" id="2.10.50.40:FF:000001">
    <property type="entry name" value="Protein DBF4 homolog A"/>
    <property type="match status" value="1"/>
</dbReference>
<dbReference type="FunFam" id="6.10.250.3410:FF:000001">
    <property type="entry name" value="Protein DBF4 homolog A"/>
    <property type="match status" value="1"/>
</dbReference>
<dbReference type="Gene3D" id="2.10.50.40">
    <property type="match status" value="1"/>
</dbReference>
<dbReference type="Gene3D" id="6.10.250.3410">
    <property type="entry name" value="DBF zinc finger"/>
    <property type="match status" value="1"/>
</dbReference>
<dbReference type="InterPro" id="IPR033379">
    <property type="entry name" value="Acid_Pase_AS"/>
</dbReference>
<dbReference type="InterPro" id="IPR051590">
    <property type="entry name" value="Replication_Regulatory_Kinase"/>
</dbReference>
<dbReference type="InterPro" id="IPR006572">
    <property type="entry name" value="Znf_DBF"/>
</dbReference>
<dbReference type="InterPro" id="IPR038545">
    <property type="entry name" value="Znf_DBF_sf"/>
</dbReference>
<dbReference type="PANTHER" id="PTHR15375">
    <property type="entry name" value="ACTIVATOR OF S-PHASE KINASE-RELATED"/>
    <property type="match status" value="1"/>
</dbReference>
<dbReference type="PANTHER" id="PTHR15375:SF22">
    <property type="entry name" value="PROTEIN DBF4 HOMOLOG A"/>
    <property type="match status" value="1"/>
</dbReference>
<dbReference type="Pfam" id="PF07535">
    <property type="entry name" value="zf-DBF"/>
    <property type="match status" value="1"/>
</dbReference>
<dbReference type="SMART" id="SM00586">
    <property type="entry name" value="ZnF_DBF"/>
    <property type="match status" value="1"/>
</dbReference>
<dbReference type="PROSITE" id="PS51265">
    <property type="entry name" value="ZF_DBF4"/>
    <property type="match status" value="1"/>
</dbReference>
<keyword id="KW-0131">Cell cycle</keyword>
<keyword id="KW-0235">DNA replication</keyword>
<keyword id="KW-0479">Metal-binding</keyword>
<keyword id="KW-0539">Nucleus</keyword>
<keyword id="KW-0597">Phosphoprotein</keyword>
<keyword id="KW-0677">Repeat</keyword>
<keyword id="KW-0862">Zinc</keyword>
<keyword id="KW-0863">Zinc-finger</keyword>
<protein>
    <recommendedName>
        <fullName>Protein DBF4 homolog A</fullName>
    </recommendedName>
    <alternativeName>
        <fullName>ChDBF4</fullName>
    </alternativeName>
</protein>
<sequence length="676" mass="75850">MNSGAMRIHSKGHFQGGIQVKNEKNRPSLKSLKTDNRPEKSKCKPLWEKVFYLDLPSVTISEKLQKDIKDLGGRVEEFLSKDISYLVSNKKEAKYAQTLGQVSPVPSPESAYTAETTSPHPSHDGSSFKSPDRVCLSRGKLLAEKAVKDHDFIPANSILSNALTWGVKILHIDDIRYYIEQKKKELCSLKKSSTSVRDSGKKAGTTIQKARTGRLKKPFLKVEDVNRSYRPFYLQLTSVPSINYATHKPCSPFDIEKPSSVQKQAQPKPRPNTDGDKCGGTPVQLQLKEKRKKGYCECCLQKYEDLETHLLSEKHKNFAQSNQYQVVDDIVSKLVFDFVEYERDTPKKKRIKYSVGSFSSVSANVLKNTEPKEKLQLEPIFQKDMVESNGQLPEEIFQCEDIQCEDIQKPEQRLVLASEPMSYSSTGLKGRDEKAASMLNASEPDIKQKFTQLPPCKNEQEGILDVSEHKLIINRNDLEQRVGDSVGVPRSCVQVSHLSPENSLPQPKLTADTTHFSAKDLQEKDLHFVFGHDSDLVTLNTSKEQLTVKAGTPSCGPQQPNECDTENTDNLPCGKIQRKVRLLLGQKKKNVDPSAELDKKRTEFLPMCEDRTCGSPVQSLLDLFQTSGEKSDFLGFTSYTENSGLCDVLDVWEDENSSSLLSTFFSSPSASTFIGF</sequence>